<dbReference type="EMBL" id="AF288386">
    <property type="protein sequence ID" value="AAK20029.1"/>
    <property type="molecule type" value="mRNA"/>
</dbReference>
<dbReference type="EMBL" id="AF361352">
    <property type="protein sequence ID" value="AAL50047.1"/>
    <property type="molecule type" value="mRNA"/>
</dbReference>
<dbReference type="EMBL" id="BC021552">
    <property type="protein sequence ID" value="AAH21552.1"/>
    <property type="molecule type" value="mRNA"/>
</dbReference>
<dbReference type="CCDS" id="CCDS12870.1"/>
<dbReference type="RefSeq" id="NP_114103.2">
    <property type="nucleotide sequence ID" value="NM_031897.2"/>
</dbReference>
<dbReference type="RefSeq" id="NP_665813.1">
    <property type="nucleotide sequence ID" value="NM_145814.2"/>
</dbReference>
<dbReference type="RefSeq" id="NP_665814.1">
    <property type="nucleotide sequence ID" value="NM_145815.1"/>
</dbReference>
<dbReference type="SMR" id="Q9BXT2"/>
<dbReference type="BioGRID" id="121871">
    <property type="interactions" value="98"/>
</dbReference>
<dbReference type="FunCoup" id="Q9BXT2">
    <property type="interactions" value="575"/>
</dbReference>
<dbReference type="IntAct" id="Q9BXT2">
    <property type="interactions" value="33"/>
</dbReference>
<dbReference type="STRING" id="9606.ENSP00000252729"/>
<dbReference type="ChEMBL" id="CHEMBL2363032"/>
<dbReference type="DrugBank" id="DB13746">
    <property type="generic name" value="Bioallethrin"/>
</dbReference>
<dbReference type="DrugBank" id="DB11148">
    <property type="generic name" value="Butamben"/>
</dbReference>
<dbReference type="DrugBank" id="DB09235">
    <property type="generic name" value="Efonidipine"/>
</dbReference>
<dbReference type="DrugBank" id="DB00228">
    <property type="generic name" value="Enflurane"/>
</dbReference>
<dbReference type="DrugBank" id="DB00153">
    <property type="generic name" value="Ergocalciferol"/>
</dbReference>
<dbReference type="DrugBank" id="DB00622">
    <property type="generic name" value="Nicardipine"/>
</dbReference>
<dbReference type="DrugBank" id="DB00661">
    <property type="generic name" value="Verapamil"/>
</dbReference>
<dbReference type="TCDB" id="8.A.16.1.2">
    <property type="family name" value="the ca(+) channel auxiliary subunit Gama1-Gama8 (ccaGama) family"/>
</dbReference>
<dbReference type="iPTMnet" id="Q9BXT2"/>
<dbReference type="PhosphoSitePlus" id="Q9BXT2"/>
<dbReference type="BioMuta" id="CACNG6"/>
<dbReference type="DMDM" id="20532019"/>
<dbReference type="jPOST" id="Q9BXT2"/>
<dbReference type="MassIVE" id="Q9BXT2"/>
<dbReference type="PaxDb" id="9606-ENSP00000252729"/>
<dbReference type="PeptideAtlas" id="Q9BXT2"/>
<dbReference type="ProteomicsDB" id="79502"/>
<dbReference type="Antibodypedia" id="32772">
    <property type="antibodies" value="116 antibodies from 18 providers"/>
</dbReference>
<dbReference type="DNASU" id="59285"/>
<dbReference type="Ensembl" id="ENST00000252729.7">
    <property type="protein sequence ID" value="ENSP00000252729.2"/>
    <property type="gene ID" value="ENSG00000130433.8"/>
</dbReference>
<dbReference type="GeneID" id="59285"/>
<dbReference type="KEGG" id="hsa:59285"/>
<dbReference type="MANE-Select" id="ENST00000252729.7">
    <property type="protein sequence ID" value="ENSP00000252729.2"/>
    <property type="RefSeq nucleotide sequence ID" value="NM_145814.2"/>
    <property type="RefSeq protein sequence ID" value="NP_665813.1"/>
</dbReference>
<dbReference type="UCSC" id="uc002qct.4">
    <property type="organism name" value="human"/>
</dbReference>
<dbReference type="AGR" id="HGNC:13625"/>
<dbReference type="CTD" id="59285"/>
<dbReference type="DisGeNET" id="59285"/>
<dbReference type="GeneCards" id="CACNG6"/>
<dbReference type="HGNC" id="HGNC:13625">
    <property type="gene designation" value="CACNG6"/>
</dbReference>
<dbReference type="HPA" id="ENSG00000130433">
    <property type="expression patterns" value="Group enriched (skeletal muscle, tongue)"/>
</dbReference>
<dbReference type="MIM" id="606898">
    <property type="type" value="gene"/>
</dbReference>
<dbReference type="neXtProt" id="NX_Q9BXT2"/>
<dbReference type="OpenTargets" id="ENSG00000130433"/>
<dbReference type="PharmGKB" id="PA26020"/>
<dbReference type="VEuPathDB" id="HostDB:ENSG00000130433"/>
<dbReference type="eggNOG" id="ENOG502QUPR">
    <property type="taxonomic scope" value="Eukaryota"/>
</dbReference>
<dbReference type="GeneTree" id="ENSGT00390000007786"/>
<dbReference type="InParanoid" id="Q9BXT2"/>
<dbReference type="OMA" id="PWQRCLP"/>
<dbReference type="OrthoDB" id="8890470at2759"/>
<dbReference type="PAN-GO" id="Q9BXT2">
    <property type="GO annotations" value="3 GO annotations based on evolutionary models"/>
</dbReference>
<dbReference type="PhylomeDB" id="Q9BXT2"/>
<dbReference type="TreeFam" id="TF331651"/>
<dbReference type="PathwayCommons" id="Q9BXT2"/>
<dbReference type="Reactome" id="R-HSA-5576892">
    <property type="pathway name" value="Phase 0 - rapid depolarisation"/>
</dbReference>
<dbReference type="Reactome" id="R-HSA-5576893">
    <property type="pathway name" value="Phase 2 - plateau phase"/>
</dbReference>
<dbReference type="SignaLink" id="Q9BXT2"/>
<dbReference type="BioGRID-ORCS" id="59285">
    <property type="hits" value="21 hits in 1143 CRISPR screens"/>
</dbReference>
<dbReference type="ChiTaRS" id="CACNG6">
    <property type="organism name" value="human"/>
</dbReference>
<dbReference type="GenomeRNAi" id="59285"/>
<dbReference type="Pharos" id="Q9BXT2">
    <property type="development level" value="Tdark"/>
</dbReference>
<dbReference type="PRO" id="PR:Q9BXT2"/>
<dbReference type="Proteomes" id="UP000005640">
    <property type="component" value="Chromosome 19"/>
</dbReference>
<dbReference type="RNAct" id="Q9BXT2">
    <property type="molecule type" value="protein"/>
</dbReference>
<dbReference type="Bgee" id="ENSG00000130433">
    <property type="expression patterns" value="Expressed in hindlimb stylopod muscle and 96 other cell types or tissues"/>
</dbReference>
<dbReference type="ExpressionAtlas" id="Q9BXT2">
    <property type="expression patterns" value="baseline and differential"/>
</dbReference>
<dbReference type="GO" id="GO:1990454">
    <property type="term" value="C:L-type voltage-gated calcium channel complex"/>
    <property type="evidence" value="ECO:0000314"/>
    <property type="project" value="UniProtKB"/>
</dbReference>
<dbReference type="GO" id="GO:0005886">
    <property type="term" value="C:plasma membrane"/>
    <property type="evidence" value="ECO:0000304"/>
    <property type="project" value="Reactome"/>
</dbReference>
<dbReference type="GO" id="GO:0005891">
    <property type="term" value="C:voltage-gated calcium channel complex"/>
    <property type="evidence" value="ECO:0000303"/>
    <property type="project" value="UniProtKB"/>
</dbReference>
<dbReference type="GO" id="GO:0005246">
    <property type="term" value="F:calcium channel regulator activity"/>
    <property type="evidence" value="ECO:0000314"/>
    <property type="project" value="UniProtKB"/>
</dbReference>
<dbReference type="GO" id="GO:0005245">
    <property type="term" value="F:voltage-gated calcium channel activity"/>
    <property type="evidence" value="ECO:0000303"/>
    <property type="project" value="UniProtKB"/>
</dbReference>
<dbReference type="GO" id="GO:0006816">
    <property type="term" value="P:calcium ion transport"/>
    <property type="evidence" value="ECO:0000303"/>
    <property type="project" value="UniProtKB"/>
</dbReference>
<dbReference type="GO" id="GO:1902514">
    <property type="term" value="P:regulation of calcium ion transmembrane transport via high voltage-gated calcium channel"/>
    <property type="evidence" value="ECO:0000318"/>
    <property type="project" value="GO_Central"/>
</dbReference>
<dbReference type="FunFam" id="1.20.140.150:FF:000038">
    <property type="entry name" value="Voltage-dependent calcium channel gamma-6 subunit"/>
    <property type="match status" value="1"/>
</dbReference>
<dbReference type="Gene3D" id="1.20.140.150">
    <property type="match status" value="1"/>
</dbReference>
<dbReference type="InterPro" id="IPR004031">
    <property type="entry name" value="PMP22/EMP/MP20/Claudin"/>
</dbReference>
<dbReference type="InterPro" id="IPR008370">
    <property type="entry name" value="VDCC_g6su"/>
</dbReference>
<dbReference type="InterPro" id="IPR008368">
    <property type="entry name" value="VDCC_gsu"/>
</dbReference>
<dbReference type="PANTHER" id="PTHR15025">
    <property type="entry name" value="VOLTAGE-DEPENDENT CALCIUM CHANNEL GAMMA-1 SUBUNIT-RELATED"/>
    <property type="match status" value="1"/>
</dbReference>
<dbReference type="PANTHER" id="PTHR15025:SF6">
    <property type="entry name" value="VOLTAGE-DEPENDENT CALCIUM CHANNEL GAMMA-6 SUBUNIT"/>
    <property type="match status" value="1"/>
</dbReference>
<dbReference type="Pfam" id="PF13903">
    <property type="entry name" value="Claudin_2"/>
    <property type="match status" value="1"/>
</dbReference>
<dbReference type="PRINTS" id="PR01792">
    <property type="entry name" value="VDCCGAMMA"/>
</dbReference>
<dbReference type="PRINTS" id="PR01794">
    <property type="entry name" value="VDCCGAMMA6"/>
</dbReference>
<comment type="function">
    <text evidence="3">Regulates the activity of L-type calcium channels that contain CACNA1C as pore-forming subunit.</text>
</comment>
<comment type="subunit">
    <text evidence="3">Interacts with CACNA1C. Identified in a complex with the L-type calcium channel subunits CACNA1C, CACNA2D1 and either CACNB1 or CACNB2.</text>
</comment>
<comment type="subcellular location">
    <subcellularLocation>
        <location evidence="5">Cell membrane</location>
        <topology evidence="4">Multi-pass membrane protein</topology>
    </subcellularLocation>
</comment>
<comment type="tissue specificity">
    <text evidence="3">Detected in heart left ventricle.</text>
</comment>
<comment type="similarity">
    <text evidence="4">Belongs to the PMP-22/EMP/MP20 family. CACNG subfamily.</text>
</comment>
<proteinExistence type="evidence at protein level"/>
<protein>
    <recommendedName>
        <fullName>Voltage-dependent calcium channel gamma-6 subunit</fullName>
    </recommendedName>
    <alternativeName>
        <fullName>Neuronal voltage-gated calcium channel gamma-6 subunit</fullName>
    </alternativeName>
</protein>
<feature type="chain" id="PRO_0000164684" description="Voltage-dependent calcium channel gamma-6 subunit">
    <location>
        <begin position="1"/>
        <end position="260"/>
    </location>
</feature>
<feature type="transmembrane region" description="Helical" evidence="1">
    <location>
        <begin position="43"/>
        <end position="63"/>
    </location>
</feature>
<feature type="transmembrane region" description="Helical" evidence="1">
    <location>
        <begin position="143"/>
        <end position="163"/>
    </location>
</feature>
<feature type="transmembrane region" description="Helical" evidence="1">
    <location>
        <begin position="169"/>
        <end position="189"/>
    </location>
</feature>
<feature type="transmembrane region" description="Helical" evidence="1">
    <location>
        <begin position="221"/>
        <end position="241"/>
    </location>
</feature>
<feature type="region of interest" description="Disordered" evidence="2">
    <location>
        <begin position="14"/>
        <end position="33"/>
    </location>
</feature>
<feature type="compositionally biased region" description="Basic residues" evidence="2">
    <location>
        <begin position="15"/>
        <end position="25"/>
    </location>
</feature>
<feature type="sequence variant" id="VAR_061540" description="In dbSNP:rs12980121.">
    <original>C</original>
    <variation>S</variation>
    <location>
        <position position="252"/>
    </location>
</feature>
<reference key="1">
    <citation type="journal article" date="2001" name="Genomics">
        <title>A cluster of three novel Ca(2+) channel gamma subunit genes on chromosome 19q13.4: evolution and expression profile of the gamma subunit gene family.</title>
        <authorList>
            <person name="Burgess D.L."/>
            <person name="Gefrides L.A."/>
            <person name="Foreman P.J."/>
            <person name="Noebels J.L."/>
        </authorList>
    </citation>
    <scope>NUCLEOTIDE SEQUENCE [MRNA]</scope>
</reference>
<reference key="2">
    <citation type="journal article" date="2001" name="Gene">
        <title>Calcium channel gamma subunits provide insights into the evolution of this gene family.</title>
        <authorList>
            <person name="Chu P.-J."/>
            <person name="Robertson H.M."/>
            <person name="Best P.M."/>
        </authorList>
    </citation>
    <scope>NUCLEOTIDE SEQUENCE [MRNA]</scope>
</reference>
<reference key="3">
    <citation type="journal article" date="2004" name="Genome Res.">
        <title>The status, quality, and expansion of the NIH full-length cDNA project: the Mammalian Gene Collection (MGC).</title>
        <authorList>
            <consortium name="The MGC Project Team"/>
        </authorList>
    </citation>
    <scope>NUCLEOTIDE SEQUENCE [LARGE SCALE MRNA]</scope>
    <source>
        <tissue>Eye</tissue>
    </source>
</reference>
<reference key="4">
    <citation type="journal article" date="2011" name="FASEB J.">
        <title>Cardiac L-type calcium channel (Cav1.2) associates with gamma subunits.</title>
        <authorList>
            <person name="Yang L."/>
            <person name="Katchman A."/>
            <person name="Morrow J.P."/>
            <person name="Doshi D."/>
            <person name="Marx S.O."/>
        </authorList>
    </citation>
    <scope>FUNCTION</scope>
    <scope>SUBUNIT</scope>
    <scope>SUBCELLULAR LOCATION</scope>
    <scope>TISSUE SPECIFICITY</scope>
</reference>
<sequence>MMWSNFFLQEENRRRGAAGRRRAHGQGRSGLTPEREGKVKLALLLAAVGATLAVLSVGTEFWVELNTYKANGSAVCEAAHLGLWKACTKRLWQADVPVDRDTCGPAELPGEANCTYFKFFTTGENARIFQRTTKKEVNLAAAVIAVLGLAVMALGCLCIIMVLSKGAEFLLRVGAVCFGLSGLLLLVSLEVFRHSVRALLQRVSPEPPPAPRLTYEYSWSLGCGVGAGLILLLGAGCFLLLTLPSWPWGSLCPKRGHRAT</sequence>
<keyword id="KW-0106">Calcium</keyword>
<keyword id="KW-0107">Calcium channel</keyword>
<keyword id="KW-0109">Calcium transport</keyword>
<keyword id="KW-1003">Cell membrane</keyword>
<keyword id="KW-0407">Ion channel</keyword>
<keyword id="KW-0406">Ion transport</keyword>
<keyword id="KW-0472">Membrane</keyword>
<keyword id="KW-1267">Proteomics identification</keyword>
<keyword id="KW-1185">Reference proteome</keyword>
<keyword id="KW-0812">Transmembrane</keyword>
<keyword id="KW-1133">Transmembrane helix</keyword>
<keyword id="KW-0813">Transport</keyword>
<keyword id="KW-0851">Voltage-gated channel</keyword>
<gene>
    <name type="primary">CACNG6</name>
</gene>
<organism>
    <name type="scientific">Homo sapiens</name>
    <name type="common">Human</name>
    <dbReference type="NCBI Taxonomy" id="9606"/>
    <lineage>
        <taxon>Eukaryota</taxon>
        <taxon>Metazoa</taxon>
        <taxon>Chordata</taxon>
        <taxon>Craniata</taxon>
        <taxon>Vertebrata</taxon>
        <taxon>Euteleostomi</taxon>
        <taxon>Mammalia</taxon>
        <taxon>Eutheria</taxon>
        <taxon>Euarchontoglires</taxon>
        <taxon>Primates</taxon>
        <taxon>Haplorrhini</taxon>
        <taxon>Catarrhini</taxon>
        <taxon>Hominidae</taxon>
        <taxon>Homo</taxon>
    </lineage>
</organism>
<name>CCG6_HUMAN</name>
<evidence type="ECO:0000255" key="1"/>
<evidence type="ECO:0000256" key="2">
    <source>
        <dbReference type="SAM" id="MobiDB-lite"/>
    </source>
</evidence>
<evidence type="ECO:0000269" key="3">
    <source>
    </source>
</evidence>
<evidence type="ECO:0000305" key="4"/>
<evidence type="ECO:0000305" key="5">
    <source>
    </source>
</evidence>
<accession>Q9BXT2</accession>